<feature type="chain" id="PRO_0000146454" description="Small ribosomal subunit protein uS12">
    <location>
        <begin position="1"/>
        <end position="142"/>
    </location>
</feature>
<name>RS12_TETTH</name>
<proteinExistence type="evidence at protein level"/>
<protein>
    <recommendedName>
        <fullName evidence="1">Small ribosomal subunit protein uS12</fullName>
    </recommendedName>
    <alternativeName>
        <fullName>40S ribosomal protein S12</fullName>
    </alternativeName>
</protein>
<reference key="1">
    <citation type="journal article" date="1986" name="EMBO J.">
        <title>An intron in a ribosomal protein gene from Tetrahymena.</title>
        <authorList>
            <person name="Nielsen H."/>
            <person name="Andreasen P.H."/>
            <person name="Dreisig H."/>
            <person name="Kristiansen K."/>
            <person name="Engberg J."/>
        </authorList>
    </citation>
    <scope>NUCLEOTIDE SEQUENCE [GENOMIC DNA]</scope>
</reference>
<organism>
    <name type="scientific">Tetrahymena thermophila</name>
    <dbReference type="NCBI Taxonomy" id="5911"/>
    <lineage>
        <taxon>Eukaryota</taxon>
        <taxon>Sar</taxon>
        <taxon>Alveolata</taxon>
        <taxon>Ciliophora</taxon>
        <taxon>Intramacronucleata</taxon>
        <taxon>Oligohymenophorea</taxon>
        <taxon>Hymenostomatida</taxon>
        <taxon>Tetrahymenina</taxon>
        <taxon>Tetrahymenidae</taxon>
        <taxon>Tetrahymena</taxon>
    </lineage>
</organism>
<accession>P06147</accession>
<evidence type="ECO:0000305" key="1"/>
<keyword id="KW-0002">3D-structure</keyword>
<keyword id="KW-0687">Ribonucleoprotein</keyword>
<keyword id="KW-0689">Ribosomal protein</keyword>
<dbReference type="EMBL" id="X04425">
    <property type="protein sequence ID" value="CAA28021.1"/>
    <property type="molecule type" value="Genomic_DNA"/>
</dbReference>
<dbReference type="PIR" id="A25699">
    <property type="entry name" value="A25699"/>
</dbReference>
<dbReference type="PDB" id="4BTS">
    <property type="method" value="X-ray"/>
    <property type="resolution" value="3.70 A"/>
    <property type="chains" value="AL/BL/CL/DL=1-142"/>
</dbReference>
<dbReference type="PDB" id="4V5O">
    <property type="method" value="X-ray"/>
    <property type="resolution" value="3.93 A"/>
    <property type="chains" value="AL/BL=1-142"/>
</dbReference>
<dbReference type="PDBsum" id="4BTS"/>
<dbReference type="PDBsum" id="4V5O"/>
<dbReference type="SMR" id="P06147"/>
<dbReference type="IntAct" id="P06147">
    <property type="interactions" value="1"/>
</dbReference>
<dbReference type="OMA" id="KFRWSQR"/>
<dbReference type="GO" id="GO:0015935">
    <property type="term" value="C:small ribosomal subunit"/>
    <property type="evidence" value="ECO:0007669"/>
    <property type="project" value="InterPro"/>
</dbReference>
<dbReference type="GO" id="GO:0003735">
    <property type="term" value="F:structural constituent of ribosome"/>
    <property type="evidence" value="ECO:0007669"/>
    <property type="project" value="InterPro"/>
</dbReference>
<dbReference type="GO" id="GO:0006412">
    <property type="term" value="P:translation"/>
    <property type="evidence" value="ECO:0007669"/>
    <property type="project" value="InterPro"/>
</dbReference>
<dbReference type="CDD" id="cd03367">
    <property type="entry name" value="Ribosomal_S23"/>
    <property type="match status" value="1"/>
</dbReference>
<dbReference type="FunFam" id="2.40.50.140:FF:000007">
    <property type="entry name" value="40S ribosomal protein S23"/>
    <property type="match status" value="1"/>
</dbReference>
<dbReference type="Gene3D" id="2.40.50.140">
    <property type="entry name" value="Nucleic acid-binding proteins"/>
    <property type="match status" value="1"/>
</dbReference>
<dbReference type="InterPro" id="IPR012340">
    <property type="entry name" value="NA-bd_OB-fold"/>
</dbReference>
<dbReference type="InterPro" id="IPR006032">
    <property type="entry name" value="Ribosomal_uS12"/>
</dbReference>
<dbReference type="InterPro" id="IPR005680">
    <property type="entry name" value="Ribosomal_uS12_euk/arc"/>
</dbReference>
<dbReference type="NCBIfam" id="TIGR00982">
    <property type="entry name" value="uS12_E_A"/>
    <property type="match status" value="1"/>
</dbReference>
<dbReference type="PANTHER" id="PTHR11652">
    <property type="entry name" value="30S RIBOSOMAL PROTEIN S12 FAMILY MEMBER"/>
    <property type="match status" value="1"/>
</dbReference>
<dbReference type="Pfam" id="PF00164">
    <property type="entry name" value="Ribosom_S12_S23"/>
    <property type="match status" value="1"/>
</dbReference>
<dbReference type="PIRSF" id="PIRSF002133">
    <property type="entry name" value="Ribosomal_S12/S23"/>
    <property type="match status" value="1"/>
</dbReference>
<dbReference type="SUPFAM" id="SSF50249">
    <property type="entry name" value="Nucleic acid-binding proteins"/>
    <property type="match status" value="1"/>
</dbReference>
<dbReference type="PROSITE" id="PS00055">
    <property type="entry name" value="RIBOSOMAL_S12"/>
    <property type="match status" value="1"/>
</dbReference>
<sequence length="142" mass="15743">MGVGKPRGIRAGRKLARHRKDQRWADNDFNKRLLGSRWRNPFMGASHAKGLVTEKIGIESKQPNSAVRKCVRVLLRKNSKKIAAFVPMDGCLNFLAENDEVLVAGLGRQGHAVGDIPGVRFKVVCVKGISLLALFKGKKEKR</sequence>
<comment type="similarity">
    <text evidence="1">Belongs to the universal ribosomal protein uS12 family.</text>
</comment>